<accession>A7GRG2</accession>
<proteinExistence type="inferred from homology"/>
<reference key="1">
    <citation type="journal article" date="2008" name="Chem. Biol. Interact.">
        <title>Extending the Bacillus cereus group genomics to putative food-borne pathogens of different toxicity.</title>
        <authorList>
            <person name="Lapidus A."/>
            <person name="Goltsman E."/>
            <person name="Auger S."/>
            <person name="Galleron N."/>
            <person name="Segurens B."/>
            <person name="Dossat C."/>
            <person name="Land M.L."/>
            <person name="Broussolle V."/>
            <person name="Brillard J."/>
            <person name="Guinebretiere M.-H."/>
            <person name="Sanchis V."/>
            <person name="Nguen-the C."/>
            <person name="Lereclus D."/>
            <person name="Richardson P."/>
            <person name="Wincker P."/>
            <person name="Weissenbach J."/>
            <person name="Ehrlich S.D."/>
            <person name="Sorokin A."/>
        </authorList>
    </citation>
    <scope>NUCLEOTIDE SEQUENCE [LARGE SCALE GENOMIC DNA]</scope>
    <source>
        <strain>DSM 22905 / CIP 110041 / 391-98 / NVH 391-98</strain>
    </source>
</reference>
<feature type="chain" id="PRO_1000084283" description="Methylenetetrahydrofolate--tRNA-(uracil-5-)-methyltransferase TrmFO">
    <location>
        <begin position="1"/>
        <end position="434"/>
    </location>
</feature>
<feature type="binding site" evidence="1">
    <location>
        <begin position="10"/>
        <end position="15"/>
    </location>
    <ligand>
        <name>FAD</name>
        <dbReference type="ChEBI" id="CHEBI:57692"/>
    </ligand>
</feature>
<organism>
    <name type="scientific">Bacillus cytotoxicus (strain DSM 22905 / CIP 110041 / 391-98 / NVH 391-98)</name>
    <dbReference type="NCBI Taxonomy" id="315749"/>
    <lineage>
        <taxon>Bacteria</taxon>
        <taxon>Bacillati</taxon>
        <taxon>Bacillota</taxon>
        <taxon>Bacilli</taxon>
        <taxon>Bacillales</taxon>
        <taxon>Bacillaceae</taxon>
        <taxon>Bacillus</taxon>
        <taxon>Bacillus cereus group</taxon>
    </lineage>
</organism>
<name>TRMFO_BACCN</name>
<evidence type="ECO:0000255" key="1">
    <source>
        <dbReference type="HAMAP-Rule" id="MF_01037"/>
    </source>
</evidence>
<comment type="function">
    <text evidence="1">Catalyzes the folate-dependent formation of 5-methyl-uridine at position 54 (M-5-U54) in all tRNAs.</text>
</comment>
<comment type="catalytic activity">
    <reaction evidence="1">
        <text>uridine(54) in tRNA + (6R)-5,10-methylene-5,6,7,8-tetrahydrofolate + NADH + H(+) = 5-methyluridine(54) in tRNA + (6S)-5,6,7,8-tetrahydrofolate + NAD(+)</text>
        <dbReference type="Rhea" id="RHEA:16873"/>
        <dbReference type="Rhea" id="RHEA-COMP:10167"/>
        <dbReference type="Rhea" id="RHEA-COMP:10193"/>
        <dbReference type="ChEBI" id="CHEBI:15378"/>
        <dbReference type="ChEBI" id="CHEBI:15636"/>
        <dbReference type="ChEBI" id="CHEBI:57453"/>
        <dbReference type="ChEBI" id="CHEBI:57540"/>
        <dbReference type="ChEBI" id="CHEBI:57945"/>
        <dbReference type="ChEBI" id="CHEBI:65315"/>
        <dbReference type="ChEBI" id="CHEBI:74447"/>
        <dbReference type="EC" id="2.1.1.74"/>
    </reaction>
</comment>
<comment type="catalytic activity">
    <reaction evidence="1">
        <text>uridine(54) in tRNA + (6R)-5,10-methylene-5,6,7,8-tetrahydrofolate + NADPH + H(+) = 5-methyluridine(54) in tRNA + (6S)-5,6,7,8-tetrahydrofolate + NADP(+)</text>
        <dbReference type="Rhea" id="RHEA:62372"/>
        <dbReference type="Rhea" id="RHEA-COMP:10167"/>
        <dbReference type="Rhea" id="RHEA-COMP:10193"/>
        <dbReference type="ChEBI" id="CHEBI:15378"/>
        <dbReference type="ChEBI" id="CHEBI:15636"/>
        <dbReference type="ChEBI" id="CHEBI:57453"/>
        <dbReference type="ChEBI" id="CHEBI:57783"/>
        <dbReference type="ChEBI" id="CHEBI:58349"/>
        <dbReference type="ChEBI" id="CHEBI:65315"/>
        <dbReference type="ChEBI" id="CHEBI:74447"/>
        <dbReference type="EC" id="2.1.1.74"/>
    </reaction>
</comment>
<comment type="cofactor">
    <cofactor evidence="1">
        <name>FAD</name>
        <dbReference type="ChEBI" id="CHEBI:57692"/>
    </cofactor>
</comment>
<comment type="subcellular location">
    <subcellularLocation>
        <location evidence="1">Cytoplasm</location>
    </subcellularLocation>
</comment>
<comment type="similarity">
    <text evidence="1">Belongs to the MnmG family. TrmFO subfamily.</text>
</comment>
<dbReference type="EC" id="2.1.1.74" evidence="1"/>
<dbReference type="EMBL" id="CP000764">
    <property type="protein sequence ID" value="ABS22720.1"/>
    <property type="molecule type" value="Genomic_DNA"/>
</dbReference>
<dbReference type="RefSeq" id="WP_012094924.1">
    <property type="nucleotide sequence ID" value="NC_009674.1"/>
</dbReference>
<dbReference type="SMR" id="A7GRG2"/>
<dbReference type="STRING" id="315749.Bcer98_2484"/>
<dbReference type="GeneID" id="33897739"/>
<dbReference type="KEGG" id="bcy:Bcer98_2484"/>
<dbReference type="eggNOG" id="COG1206">
    <property type="taxonomic scope" value="Bacteria"/>
</dbReference>
<dbReference type="HOGENOM" id="CLU_033057_1_0_9"/>
<dbReference type="OrthoDB" id="9803114at2"/>
<dbReference type="Proteomes" id="UP000002300">
    <property type="component" value="Chromosome"/>
</dbReference>
<dbReference type="GO" id="GO:0005829">
    <property type="term" value="C:cytosol"/>
    <property type="evidence" value="ECO:0007669"/>
    <property type="project" value="TreeGrafter"/>
</dbReference>
<dbReference type="GO" id="GO:0050660">
    <property type="term" value="F:flavin adenine dinucleotide binding"/>
    <property type="evidence" value="ECO:0007669"/>
    <property type="project" value="UniProtKB-UniRule"/>
</dbReference>
<dbReference type="GO" id="GO:0047151">
    <property type="term" value="F:tRNA (uracil(54)-C5)-methyltransferase activity, 5,10-methylenetetrahydrofolate-dependent"/>
    <property type="evidence" value="ECO:0007669"/>
    <property type="project" value="UniProtKB-UniRule"/>
</dbReference>
<dbReference type="GO" id="GO:0030488">
    <property type="term" value="P:tRNA methylation"/>
    <property type="evidence" value="ECO:0007669"/>
    <property type="project" value="TreeGrafter"/>
</dbReference>
<dbReference type="GO" id="GO:0002098">
    <property type="term" value="P:tRNA wobble uridine modification"/>
    <property type="evidence" value="ECO:0007669"/>
    <property type="project" value="TreeGrafter"/>
</dbReference>
<dbReference type="FunFam" id="3.50.50.60:FF:000035">
    <property type="entry name" value="Methylenetetrahydrofolate--tRNA-(uracil-5-)-methyltransferase TrmFO"/>
    <property type="match status" value="1"/>
</dbReference>
<dbReference type="FunFam" id="3.50.50.60:FF:000040">
    <property type="entry name" value="Methylenetetrahydrofolate--tRNA-(uracil-5-)-methyltransferase TrmFO"/>
    <property type="match status" value="1"/>
</dbReference>
<dbReference type="Gene3D" id="3.50.50.60">
    <property type="entry name" value="FAD/NAD(P)-binding domain"/>
    <property type="match status" value="2"/>
</dbReference>
<dbReference type="HAMAP" id="MF_01037">
    <property type="entry name" value="TrmFO"/>
    <property type="match status" value="1"/>
</dbReference>
<dbReference type="InterPro" id="IPR036188">
    <property type="entry name" value="FAD/NAD-bd_sf"/>
</dbReference>
<dbReference type="InterPro" id="IPR002218">
    <property type="entry name" value="MnmG-rel"/>
</dbReference>
<dbReference type="InterPro" id="IPR020595">
    <property type="entry name" value="MnmG-rel_CS"/>
</dbReference>
<dbReference type="InterPro" id="IPR040131">
    <property type="entry name" value="MnmG_N"/>
</dbReference>
<dbReference type="InterPro" id="IPR004417">
    <property type="entry name" value="TrmFO"/>
</dbReference>
<dbReference type="NCBIfam" id="TIGR00137">
    <property type="entry name" value="gid_trmFO"/>
    <property type="match status" value="1"/>
</dbReference>
<dbReference type="NCBIfam" id="NF003739">
    <property type="entry name" value="PRK05335.1"/>
    <property type="match status" value="1"/>
</dbReference>
<dbReference type="PANTHER" id="PTHR11806">
    <property type="entry name" value="GLUCOSE INHIBITED DIVISION PROTEIN A"/>
    <property type="match status" value="1"/>
</dbReference>
<dbReference type="PANTHER" id="PTHR11806:SF2">
    <property type="entry name" value="METHYLENETETRAHYDROFOLATE--TRNA-(URACIL-5-)-METHYLTRANSFERASE TRMFO"/>
    <property type="match status" value="1"/>
</dbReference>
<dbReference type="Pfam" id="PF01134">
    <property type="entry name" value="GIDA"/>
    <property type="match status" value="1"/>
</dbReference>
<dbReference type="SUPFAM" id="SSF51905">
    <property type="entry name" value="FAD/NAD(P)-binding domain"/>
    <property type="match status" value="1"/>
</dbReference>
<dbReference type="PROSITE" id="PS01281">
    <property type="entry name" value="GIDA_2"/>
    <property type="match status" value="1"/>
</dbReference>
<keyword id="KW-0963">Cytoplasm</keyword>
<keyword id="KW-0274">FAD</keyword>
<keyword id="KW-0285">Flavoprotein</keyword>
<keyword id="KW-0489">Methyltransferase</keyword>
<keyword id="KW-0520">NAD</keyword>
<keyword id="KW-0521">NADP</keyword>
<keyword id="KW-0808">Transferase</keyword>
<keyword id="KW-0819">tRNA processing</keyword>
<gene>
    <name evidence="1" type="primary">trmFO</name>
    <name type="synonym">gid</name>
    <name type="ordered locus">Bcer98_2484</name>
</gene>
<sequence>MTTQVVKVIGAGLAGSEAAYQIAKRGIQVHLYEMRPVKQTPAHHTDKFAELVCSNSLRANTLTNAVGVIKEEMRRMDSVIIRAADECSVPAGGALAVDRHEFAAKVTEYVKNHPNVTVMNEEITEIPEGPTVIATGPLTSPALAAQLKELTGEEYFYFYDAAAPIIEKDSIDMNKVYLKSRYDKGEAAYLNCPMTEDEFNRFYDALIAAETVPLKEFEKEIFFEGCMPVEVMAARGRQTLLFGPMKPVGLEDPKTGKTPYAVVQLRQDDAAGTLYNIVGFQTHLKWGPQKEVLQLIPGLENAEIVRYGVMHRNTFINSPKLLRPTYQYKHRDDLFFAGQMTGVEGYVESAASGLLAGINAARLLKGEEPVVLPSVTAMGSMANYITSTNAKNFQPMNANFGLFAPLEKKIKKKQERNEAYATRALETIQNFVNI</sequence>
<protein>
    <recommendedName>
        <fullName evidence="1">Methylenetetrahydrofolate--tRNA-(uracil-5-)-methyltransferase TrmFO</fullName>
        <ecNumber evidence="1">2.1.1.74</ecNumber>
    </recommendedName>
    <alternativeName>
        <fullName evidence="1">Folate-dependent tRNA (uracil-5-)-methyltransferase</fullName>
    </alternativeName>
    <alternativeName>
        <fullName evidence="1">Folate-dependent tRNA(M-5-U54)-methyltransferase</fullName>
    </alternativeName>
</protein>